<keyword id="KW-0067">ATP-binding</keyword>
<keyword id="KW-0143">Chaperone</keyword>
<keyword id="KW-0963">Cytoplasm</keyword>
<keyword id="KW-0413">Isomerase</keyword>
<keyword id="KW-0547">Nucleotide-binding</keyword>
<feature type="chain" id="PRO_0000063254" description="Chaperonin GroEL">
    <location>
        <begin position="1"/>
        <end position="547"/>
    </location>
</feature>
<feature type="binding site" evidence="1">
    <location>
        <begin position="30"/>
        <end position="33"/>
    </location>
    <ligand>
        <name>ATP</name>
        <dbReference type="ChEBI" id="CHEBI:30616"/>
    </ligand>
</feature>
<feature type="binding site" evidence="1">
    <location>
        <position position="51"/>
    </location>
    <ligand>
        <name>ATP</name>
        <dbReference type="ChEBI" id="CHEBI:30616"/>
    </ligand>
</feature>
<feature type="binding site" evidence="1">
    <location>
        <begin position="87"/>
        <end position="91"/>
    </location>
    <ligand>
        <name>ATP</name>
        <dbReference type="ChEBI" id="CHEBI:30616"/>
    </ligand>
</feature>
<feature type="binding site" evidence="1">
    <location>
        <position position="415"/>
    </location>
    <ligand>
        <name>ATP</name>
        <dbReference type="ChEBI" id="CHEBI:30616"/>
    </ligand>
</feature>
<feature type="binding site" evidence="1">
    <location>
        <position position="496"/>
    </location>
    <ligand>
        <name>ATP</name>
        <dbReference type="ChEBI" id="CHEBI:30616"/>
    </ligand>
</feature>
<proteinExistence type="inferred from homology"/>
<organism>
    <name type="scientific">Actinobacillus pleuropneumoniae</name>
    <name type="common">Haemophilus pleuropneumoniae</name>
    <dbReference type="NCBI Taxonomy" id="715"/>
    <lineage>
        <taxon>Bacteria</taxon>
        <taxon>Pseudomonadati</taxon>
        <taxon>Pseudomonadota</taxon>
        <taxon>Gammaproteobacteria</taxon>
        <taxon>Pasteurellales</taxon>
        <taxon>Pasteurellaceae</taxon>
        <taxon>Actinobacillus</taxon>
    </lineage>
</organism>
<protein>
    <recommendedName>
        <fullName evidence="1">Chaperonin GroEL</fullName>
        <ecNumber evidence="1">5.6.1.7</ecNumber>
    </recommendedName>
    <alternativeName>
        <fullName evidence="1">60 kDa chaperonin</fullName>
    </alternativeName>
    <alternativeName>
        <fullName evidence="1">Chaperonin-60</fullName>
        <shortName evidence="1">Cpn60</shortName>
    </alternativeName>
</protein>
<reference key="1">
    <citation type="journal article" date="1997" name="FEMS Microbiol. Lett.">
        <title>Cloning and characterization of the groE locus from Actinobacillus pleuropneumoniae.</title>
        <authorList>
            <person name="Vezina G."/>
            <person name="Sirois M."/>
            <person name="Clairoux N."/>
            <person name="Boissinot M."/>
        </authorList>
    </citation>
    <scope>NUCLEOTIDE SEQUENCE [GENOMIC DNA]</scope>
    <source>
        <strain>ATCC 27088 / DSM 13472 / CCM 5869 / S4074 / Serotype 1</strain>
    </source>
</reference>
<evidence type="ECO:0000255" key="1">
    <source>
        <dbReference type="HAMAP-Rule" id="MF_00600"/>
    </source>
</evidence>
<gene>
    <name evidence="1" type="primary">groEL</name>
    <name evidence="1" type="synonym">groL</name>
    <name type="synonym">mopA</name>
</gene>
<comment type="function">
    <text evidence="1">Together with its co-chaperonin GroES, plays an essential role in assisting protein folding. The GroEL-GroES system forms a nano-cage that allows encapsulation of the non-native substrate proteins and provides a physical environment optimized to promote and accelerate protein folding.</text>
</comment>
<comment type="catalytic activity">
    <reaction evidence="1">
        <text>ATP + H2O + a folded polypeptide = ADP + phosphate + an unfolded polypeptide.</text>
        <dbReference type="EC" id="5.6.1.7"/>
    </reaction>
</comment>
<comment type="subunit">
    <text evidence="1">Forms a cylinder of 14 subunits composed of two heptameric rings stacked back-to-back. Interacts with the co-chaperonin GroES.</text>
</comment>
<comment type="subcellular location">
    <subcellularLocation>
        <location evidence="1">Cytoplasm</location>
    </subcellularLocation>
</comment>
<comment type="similarity">
    <text evidence="1">Belongs to the chaperonin (HSP60) family.</text>
</comment>
<sequence length="547" mass="57644">MAAKDVKFGNDARVKMLKGVNVLADAVKVTLGPKGRNVVLDKAYGAPTITKDGVSVAREIELEDKFENMGAQMVKEVASKANDAAGDGTTTATVLAQAIVNEGLKAVAAGMNPMDLKRGIDKAVVAVVEELKAISKPCETSKEIEQVGTISANSDETVGKLIAQAMEKVGKEGVITVEDGTGLDDALDVVEGMQFDRGYLSPYFINKPEAGTVELENPYIILVDKKISNIREILPVLEAVAKAGKPLLIVAEDIEGEALATLVVNTMRGIVKVAAVKAPGFGDRRKAMLQDIAILTAGTVISEEIGMELEKATLEELGQAKRVVITKDNTTIIDGIGDEAQIKARVAQIRQQIEDSTSDYDKEKLQERVAKLAGGVAVIKVGAATEVAMKEKKDRVDDALHATRAAVEEGIVPGGGVALVRAASKVATTLTGDNEEQNVGIKLALRAMEAPLRQIVTNAGEEASVVARNVKDGNGNYGYNAGTEQYGDMLEMGILDPPKVTRSALQFAASIAGLMITTECMITDLPKEEKLDPAAAMGGMGGMGGMM</sequence>
<dbReference type="EC" id="5.6.1.7" evidence="1"/>
<dbReference type="EMBL" id="U55016">
    <property type="protein sequence ID" value="AAB51437.1"/>
    <property type="molecule type" value="Genomic_DNA"/>
</dbReference>
<dbReference type="SMR" id="P94166"/>
<dbReference type="GO" id="GO:0005737">
    <property type="term" value="C:cytoplasm"/>
    <property type="evidence" value="ECO:0007669"/>
    <property type="project" value="UniProtKB-SubCell"/>
</dbReference>
<dbReference type="GO" id="GO:0005524">
    <property type="term" value="F:ATP binding"/>
    <property type="evidence" value="ECO:0007669"/>
    <property type="project" value="UniProtKB-UniRule"/>
</dbReference>
<dbReference type="GO" id="GO:0140662">
    <property type="term" value="F:ATP-dependent protein folding chaperone"/>
    <property type="evidence" value="ECO:0007669"/>
    <property type="project" value="InterPro"/>
</dbReference>
<dbReference type="GO" id="GO:0016853">
    <property type="term" value="F:isomerase activity"/>
    <property type="evidence" value="ECO:0007669"/>
    <property type="project" value="UniProtKB-KW"/>
</dbReference>
<dbReference type="GO" id="GO:0051082">
    <property type="term" value="F:unfolded protein binding"/>
    <property type="evidence" value="ECO:0007669"/>
    <property type="project" value="UniProtKB-UniRule"/>
</dbReference>
<dbReference type="GO" id="GO:0042026">
    <property type="term" value="P:protein refolding"/>
    <property type="evidence" value="ECO:0007669"/>
    <property type="project" value="UniProtKB-UniRule"/>
</dbReference>
<dbReference type="CDD" id="cd03344">
    <property type="entry name" value="GroEL"/>
    <property type="match status" value="1"/>
</dbReference>
<dbReference type="FunFam" id="1.10.560.10:FF:000001">
    <property type="entry name" value="60 kDa chaperonin"/>
    <property type="match status" value="1"/>
</dbReference>
<dbReference type="FunFam" id="3.50.7.10:FF:000001">
    <property type="entry name" value="60 kDa chaperonin"/>
    <property type="match status" value="1"/>
</dbReference>
<dbReference type="Gene3D" id="3.50.7.10">
    <property type="entry name" value="GroEL"/>
    <property type="match status" value="1"/>
</dbReference>
<dbReference type="Gene3D" id="1.10.560.10">
    <property type="entry name" value="GroEL-like equatorial domain"/>
    <property type="match status" value="1"/>
</dbReference>
<dbReference type="Gene3D" id="3.30.260.10">
    <property type="entry name" value="TCP-1-like chaperonin intermediate domain"/>
    <property type="match status" value="1"/>
</dbReference>
<dbReference type="HAMAP" id="MF_00600">
    <property type="entry name" value="CH60"/>
    <property type="match status" value="1"/>
</dbReference>
<dbReference type="InterPro" id="IPR018370">
    <property type="entry name" value="Chaperonin_Cpn60_CS"/>
</dbReference>
<dbReference type="InterPro" id="IPR001844">
    <property type="entry name" value="Cpn60/GroEL"/>
</dbReference>
<dbReference type="InterPro" id="IPR002423">
    <property type="entry name" value="Cpn60/GroEL/TCP-1"/>
</dbReference>
<dbReference type="InterPro" id="IPR027409">
    <property type="entry name" value="GroEL-like_apical_dom_sf"/>
</dbReference>
<dbReference type="InterPro" id="IPR027413">
    <property type="entry name" value="GROEL-like_equatorial_sf"/>
</dbReference>
<dbReference type="InterPro" id="IPR027410">
    <property type="entry name" value="TCP-1-like_intermed_sf"/>
</dbReference>
<dbReference type="NCBIfam" id="TIGR02348">
    <property type="entry name" value="GroEL"/>
    <property type="match status" value="1"/>
</dbReference>
<dbReference type="NCBIfam" id="NF000592">
    <property type="entry name" value="PRK00013.1"/>
    <property type="match status" value="1"/>
</dbReference>
<dbReference type="NCBIfam" id="NF009487">
    <property type="entry name" value="PRK12849.1"/>
    <property type="match status" value="1"/>
</dbReference>
<dbReference type="NCBIfam" id="NF009488">
    <property type="entry name" value="PRK12850.1"/>
    <property type="match status" value="1"/>
</dbReference>
<dbReference type="NCBIfam" id="NF009489">
    <property type="entry name" value="PRK12851.1"/>
    <property type="match status" value="1"/>
</dbReference>
<dbReference type="PANTHER" id="PTHR45633">
    <property type="entry name" value="60 KDA HEAT SHOCK PROTEIN, MITOCHONDRIAL"/>
    <property type="match status" value="1"/>
</dbReference>
<dbReference type="Pfam" id="PF00118">
    <property type="entry name" value="Cpn60_TCP1"/>
    <property type="match status" value="1"/>
</dbReference>
<dbReference type="PRINTS" id="PR00298">
    <property type="entry name" value="CHAPERONIN60"/>
</dbReference>
<dbReference type="SUPFAM" id="SSF52029">
    <property type="entry name" value="GroEL apical domain-like"/>
    <property type="match status" value="1"/>
</dbReference>
<dbReference type="SUPFAM" id="SSF48592">
    <property type="entry name" value="GroEL equatorial domain-like"/>
    <property type="match status" value="2"/>
</dbReference>
<dbReference type="PROSITE" id="PS00296">
    <property type="entry name" value="CHAPERONINS_CPN60"/>
    <property type="match status" value="1"/>
</dbReference>
<accession>P94166</accession>
<name>CH60_ACTPL</name>